<evidence type="ECO:0000255" key="1">
    <source>
        <dbReference type="HAMAP-Rule" id="MF_01033"/>
    </source>
</evidence>
<proteinExistence type="inferred from homology"/>
<organism>
    <name type="scientific">Caulobacter vibrioides (strain ATCC 19089 / CIP 103742 / CB 15)</name>
    <name type="common">Caulobacter crescentus</name>
    <dbReference type="NCBI Taxonomy" id="190650"/>
    <lineage>
        <taxon>Bacteria</taxon>
        <taxon>Pseudomonadati</taxon>
        <taxon>Pseudomonadota</taxon>
        <taxon>Alphaproteobacteria</taxon>
        <taxon>Caulobacterales</taxon>
        <taxon>Caulobacteraceae</taxon>
        <taxon>Caulobacter</taxon>
    </lineage>
</organism>
<feature type="chain" id="PRO_0000083677" description="3-isopropylmalate dehydrogenase">
    <location>
        <begin position="1"/>
        <end position="350"/>
    </location>
</feature>
<feature type="binding site" evidence="1">
    <location>
        <begin position="71"/>
        <end position="84"/>
    </location>
    <ligand>
        <name>NAD(+)</name>
        <dbReference type="ChEBI" id="CHEBI:57540"/>
    </ligand>
</feature>
<feature type="binding site" evidence="1">
    <location>
        <position position="91"/>
    </location>
    <ligand>
        <name>substrate</name>
    </ligand>
</feature>
<feature type="binding site" evidence="1">
    <location>
        <position position="101"/>
    </location>
    <ligand>
        <name>substrate</name>
    </ligand>
</feature>
<feature type="binding site" evidence="1">
    <location>
        <position position="129"/>
    </location>
    <ligand>
        <name>substrate</name>
    </ligand>
</feature>
<feature type="binding site" evidence="1">
    <location>
        <position position="220"/>
    </location>
    <ligand>
        <name>Mg(2+)</name>
        <dbReference type="ChEBI" id="CHEBI:18420"/>
    </ligand>
</feature>
<feature type="binding site" evidence="1">
    <location>
        <position position="220"/>
    </location>
    <ligand>
        <name>substrate</name>
    </ligand>
</feature>
<feature type="binding site" evidence="1">
    <location>
        <position position="244"/>
    </location>
    <ligand>
        <name>Mg(2+)</name>
        <dbReference type="ChEBI" id="CHEBI:18420"/>
    </ligand>
</feature>
<feature type="binding site" evidence="1">
    <location>
        <position position="248"/>
    </location>
    <ligand>
        <name>Mg(2+)</name>
        <dbReference type="ChEBI" id="CHEBI:18420"/>
    </ligand>
</feature>
<feature type="binding site" evidence="1">
    <location>
        <begin position="279"/>
        <end position="291"/>
    </location>
    <ligand>
        <name>NAD(+)</name>
        <dbReference type="ChEBI" id="CHEBI:57540"/>
    </ligand>
</feature>
<feature type="site" description="Important for catalysis" evidence="1">
    <location>
        <position position="136"/>
    </location>
</feature>
<feature type="site" description="Important for catalysis" evidence="1">
    <location>
        <position position="187"/>
    </location>
</feature>
<name>LEU3_CAUVC</name>
<comment type="function">
    <text evidence="1">Catalyzes the oxidation of 3-carboxy-2-hydroxy-4-methylpentanoate (3-isopropylmalate) to 3-carboxy-4-methyl-2-oxopentanoate. The product decarboxylates to 4-methyl-2 oxopentanoate.</text>
</comment>
<comment type="catalytic activity">
    <reaction evidence="1">
        <text>(2R,3S)-3-isopropylmalate + NAD(+) = 4-methyl-2-oxopentanoate + CO2 + NADH</text>
        <dbReference type="Rhea" id="RHEA:32271"/>
        <dbReference type="ChEBI" id="CHEBI:16526"/>
        <dbReference type="ChEBI" id="CHEBI:17865"/>
        <dbReference type="ChEBI" id="CHEBI:35121"/>
        <dbReference type="ChEBI" id="CHEBI:57540"/>
        <dbReference type="ChEBI" id="CHEBI:57945"/>
        <dbReference type="EC" id="1.1.1.85"/>
    </reaction>
</comment>
<comment type="cofactor">
    <cofactor evidence="1">
        <name>Mg(2+)</name>
        <dbReference type="ChEBI" id="CHEBI:18420"/>
    </cofactor>
    <cofactor evidence="1">
        <name>Mn(2+)</name>
        <dbReference type="ChEBI" id="CHEBI:29035"/>
    </cofactor>
    <text evidence="1">Binds 1 Mg(2+) or Mn(2+) ion per subunit.</text>
</comment>
<comment type="pathway">
    <text evidence="1">Amino-acid biosynthesis; L-leucine biosynthesis; L-leucine from 3-methyl-2-oxobutanoate: step 3/4.</text>
</comment>
<comment type="subunit">
    <text evidence="1">Homodimer.</text>
</comment>
<comment type="subcellular location">
    <subcellularLocation>
        <location evidence="1">Cytoplasm</location>
    </subcellularLocation>
</comment>
<comment type="similarity">
    <text evidence="1">Belongs to the isocitrate and isopropylmalate dehydrogenases family. LeuB type 1 subfamily.</text>
</comment>
<gene>
    <name evidence="1" type="primary">leuB</name>
    <name type="ordered locus">CC_0193</name>
</gene>
<reference key="1">
    <citation type="journal article" date="2001" name="Proc. Natl. Acad. Sci. U.S.A.">
        <title>Complete genome sequence of Caulobacter crescentus.</title>
        <authorList>
            <person name="Nierman W.C."/>
            <person name="Feldblyum T.V."/>
            <person name="Laub M.T."/>
            <person name="Paulsen I.T."/>
            <person name="Nelson K.E."/>
            <person name="Eisen J.A."/>
            <person name="Heidelberg J.F."/>
            <person name="Alley M.R.K."/>
            <person name="Ohta N."/>
            <person name="Maddock J.R."/>
            <person name="Potocka I."/>
            <person name="Nelson W.C."/>
            <person name="Newton A."/>
            <person name="Stephens C."/>
            <person name="Phadke N.D."/>
            <person name="Ely B."/>
            <person name="DeBoy R.T."/>
            <person name="Dodson R.J."/>
            <person name="Durkin A.S."/>
            <person name="Gwinn M.L."/>
            <person name="Haft D.H."/>
            <person name="Kolonay J.F."/>
            <person name="Smit J."/>
            <person name="Craven M.B."/>
            <person name="Khouri H.M."/>
            <person name="Shetty J."/>
            <person name="Berry K.J."/>
            <person name="Utterback T.R."/>
            <person name="Tran K."/>
            <person name="Wolf A.M."/>
            <person name="Vamathevan J.J."/>
            <person name="Ermolaeva M.D."/>
            <person name="White O."/>
            <person name="Salzberg S.L."/>
            <person name="Venter J.C."/>
            <person name="Shapiro L."/>
            <person name="Fraser C.M."/>
        </authorList>
    </citation>
    <scope>NUCLEOTIDE SEQUENCE [LARGE SCALE GENOMIC DNA]</scope>
    <source>
        <strain>ATCC 19089 / CIP 103742 / CB 15</strain>
    </source>
</reference>
<sequence>MATLLLLPGDGIGPEVCAQVRRVAAALTPDLKVDEALYGGASYDTHGTPLTDEVREQALASDAVLMGAVGGPKWADAPRHLRPEAGLLNLRKAMDVFANLRPAYCFEALAGASSLKPELVSGLDIMFVRELVGGVYFGQPRGIEDLADGQKKGFDTQVYTTSEIERVGRVAFELARGRTNKVHSAEKSNVMESGLLWKQVITELHAREYPDVQLEHILADNCAMQLVRAPKQFDVIVTDNLFGDILSDAAAMLTGSLGMLPSAALGAPGKPGLYEPIHGSAPDIAGKGLANPLAAILSFEMALRWSLKQTEAADALLAAVKAALDNGARTRDLGGSLTTTQMGDAVLAAL</sequence>
<accession>Q9ABN3</accession>
<dbReference type="EC" id="1.1.1.85" evidence="1"/>
<dbReference type="EMBL" id="AE005673">
    <property type="protein sequence ID" value="AAK22180.1"/>
    <property type="molecule type" value="Genomic_DNA"/>
</dbReference>
<dbReference type="PIR" id="H87272">
    <property type="entry name" value="H87272"/>
</dbReference>
<dbReference type="RefSeq" id="NP_419012.1">
    <property type="nucleotide sequence ID" value="NC_002696.2"/>
</dbReference>
<dbReference type="RefSeq" id="WP_010918082.1">
    <property type="nucleotide sequence ID" value="NC_002696.2"/>
</dbReference>
<dbReference type="SMR" id="Q9ABN3"/>
<dbReference type="STRING" id="190650.CC_0193"/>
<dbReference type="EnsemblBacteria" id="AAK22180">
    <property type="protein sequence ID" value="AAK22180"/>
    <property type="gene ID" value="CC_0193"/>
</dbReference>
<dbReference type="KEGG" id="ccr:CC_0193"/>
<dbReference type="PATRIC" id="fig|190650.5.peg.190"/>
<dbReference type="eggNOG" id="COG0473">
    <property type="taxonomic scope" value="Bacteria"/>
</dbReference>
<dbReference type="HOGENOM" id="CLU_031953_0_3_5"/>
<dbReference type="BioCyc" id="CAULO:CC0193-MONOMER"/>
<dbReference type="UniPathway" id="UPA00048">
    <property type="reaction ID" value="UER00072"/>
</dbReference>
<dbReference type="Proteomes" id="UP000001816">
    <property type="component" value="Chromosome"/>
</dbReference>
<dbReference type="GO" id="GO:0005829">
    <property type="term" value="C:cytosol"/>
    <property type="evidence" value="ECO:0007669"/>
    <property type="project" value="TreeGrafter"/>
</dbReference>
<dbReference type="GO" id="GO:0003862">
    <property type="term" value="F:3-isopropylmalate dehydrogenase activity"/>
    <property type="evidence" value="ECO:0007669"/>
    <property type="project" value="UniProtKB-UniRule"/>
</dbReference>
<dbReference type="GO" id="GO:0000287">
    <property type="term" value="F:magnesium ion binding"/>
    <property type="evidence" value="ECO:0007669"/>
    <property type="project" value="InterPro"/>
</dbReference>
<dbReference type="GO" id="GO:0051287">
    <property type="term" value="F:NAD binding"/>
    <property type="evidence" value="ECO:0007669"/>
    <property type="project" value="InterPro"/>
</dbReference>
<dbReference type="GO" id="GO:0009098">
    <property type="term" value="P:L-leucine biosynthetic process"/>
    <property type="evidence" value="ECO:0007669"/>
    <property type="project" value="UniProtKB-UniRule"/>
</dbReference>
<dbReference type="FunFam" id="3.40.718.10:FF:000006">
    <property type="entry name" value="3-isopropylmalate dehydrogenase"/>
    <property type="match status" value="1"/>
</dbReference>
<dbReference type="Gene3D" id="3.40.718.10">
    <property type="entry name" value="Isopropylmalate Dehydrogenase"/>
    <property type="match status" value="1"/>
</dbReference>
<dbReference type="HAMAP" id="MF_01033">
    <property type="entry name" value="LeuB_type1"/>
    <property type="match status" value="1"/>
</dbReference>
<dbReference type="InterPro" id="IPR019818">
    <property type="entry name" value="IsoCit/isopropylmalate_DH_CS"/>
</dbReference>
<dbReference type="InterPro" id="IPR024084">
    <property type="entry name" value="IsoPropMal-DH-like_dom"/>
</dbReference>
<dbReference type="InterPro" id="IPR004429">
    <property type="entry name" value="Isopropylmalate_DH"/>
</dbReference>
<dbReference type="NCBIfam" id="TIGR00169">
    <property type="entry name" value="leuB"/>
    <property type="match status" value="1"/>
</dbReference>
<dbReference type="PANTHER" id="PTHR42979">
    <property type="entry name" value="3-ISOPROPYLMALATE DEHYDROGENASE"/>
    <property type="match status" value="1"/>
</dbReference>
<dbReference type="PANTHER" id="PTHR42979:SF1">
    <property type="entry name" value="3-ISOPROPYLMALATE DEHYDROGENASE"/>
    <property type="match status" value="1"/>
</dbReference>
<dbReference type="Pfam" id="PF00180">
    <property type="entry name" value="Iso_dh"/>
    <property type="match status" value="1"/>
</dbReference>
<dbReference type="SMART" id="SM01329">
    <property type="entry name" value="Iso_dh"/>
    <property type="match status" value="1"/>
</dbReference>
<dbReference type="SUPFAM" id="SSF53659">
    <property type="entry name" value="Isocitrate/Isopropylmalate dehydrogenase-like"/>
    <property type="match status" value="1"/>
</dbReference>
<dbReference type="PROSITE" id="PS00470">
    <property type="entry name" value="IDH_IMDH"/>
    <property type="match status" value="1"/>
</dbReference>
<keyword id="KW-0028">Amino-acid biosynthesis</keyword>
<keyword id="KW-0100">Branched-chain amino acid biosynthesis</keyword>
<keyword id="KW-0963">Cytoplasm</keyword>
<keyword id="KW-0432">Leucine biosynthesis</keyword>
<keyword id="KW-0460">Magnesium</keyword>
<keyword id="KW-0464">Manganese</keyword>
<keyword id="KW-0479">Metal-binding</keyword>
<keyword id="KW-0520">NAD</keyword>
<keyword id="KW-0560">Oxidoreductase</keyword>
<keyword id="KW-1185">Reference proteome</keyword>
<protein>
    <recommendedName>
        <fullName evidence="1">3-isopropylmalate dehydrogenase</fullName>
        <ecNumber evidence="1">1.1.1.85</ecNumber>
    </recommendedName>
    <alternativeName>
        <fullName evidence="1">3-IPM-DH</fullName>
    </alternativeName>
    <alternativeName>
        <fullName evidence="1">Beta-IPM dehydrogenase</fullName>
        <shortName evidence="1">IMDH</shortName>
    </alternativeName>
</protein>